<gene>
    <name type="primary">pknG</name>
    <name type="ordered locus">BQ2027_MB0418C</name>
</gene>
<keyword id="KW-0067">ATP-binding</keyword>
<keyword id="KW-0418">Kinase</keyword>
<keyword id="KW-0547">Nucleotide-binding</keyword>
<keyword id="KW-0597">Phosphoprotein</keyword>
<keyword id="KW-1185">Reference proteome</keyword>
<keyword id="KW-0723">Serine/threonine-protein kinase</keyword>
<keyword id="KW-0808">Transferase</keyword>
<dbReference type="EC" id="2.7.11.1"/>
<dbReference type="EMBL" id="LT708304">
    <property type="protein sequence ID" value="SIT98994.1"/>
    <property type="molecule type" value="Genomic_DNA"/>
</dbReference>
<dbReference type="RefSeq" id="NP_854081.1">
    <property type="nucleotide sequence ID" value="NC_002945.3"/>
</dbReference>
<dbReference type="RefSeq" id="WP_003402100.1">
    <property type="nucleotide sequence ID" value="NC_002945.4"/>
</dbReference>
<dbReference type="SMR" id="P65729"/>
<dbReference type="TCDB" id="9.B.321.1.1">
    <property type="family name" value="the actinobacterial nutrient-sensing signal transduction pathway controlling glutamate metabolism (sigt) family"/>
</dbReference>
<dbReference type="PATRIC" id="fig|233413.5.peg.456"/>
<dbReference type="Proteomes" id="UP000001419">
    <property type="component" value="Chromosome"/>
</dbReference>
<dbReference type="GO" id="GO:0005524">
    <property type="term" value="F:ATP binding"/>
    <property type="evidence" value="ECO:0007669"/>
    <property type="project" value="UniProtKB-KW"/>
</dbReference>
<dbReference type="GO" id="GO:0106310">
    <property type="term" value="F:protein serine kinase activity"/>
    <property type="evidence" value="ECO:0007669"/>
    <property type="project" value="RHEA"/>
</dbReference>
<dbReference type="GO" id="GO:0004674">
    <property type="term" value="F:protein serine/threonine kinase activity"/>
    <property type="evidence" value="ECO:0007669"/>
    <property type="project" value="UniProtKB-KW"/>
</dbReference>
<dbReference type="GO" id="GO:0019222">
    <property type="term" value="P:regulation of metabolic process"/>
    <property type="evidence" value="ECO:0007669"/>
    <property type="project" value="UniProtKB-ARBA"/>
</dbReference>
<dbReference type="CDD" id="cd14014">
    <property type="entry name" value="STKc_PknB_like"/>
    <property type="match status" value="1"/>
</dbReference>
<dbReference type="FunFam" id="1.10.510.10:FF:000306">
    <property type="entry name" value="Serine/threonine protein kinase"/>
    <property type="match status" value="1"/>
</dbReference>
<dbReference type="FunFam" id="1.25.40.10:FF:000318">
    <property type="entry name" value="Serine/threonine protein kinase"/>
    <property type="match status" value="1"/>
</dbReference>
<dbReference type="FunFam" id="3.30.200.20:FF:000205">
    <property type="entry name" value="Serine/threonine protein kinase"/>
    <property type="match status" value="1"/>
</dbReference>
<dbReference type="FunFam" id="1.25.40.10:FF:000824">
    <property type="entry name" value="Serine/threonine-protein kinase PknG"/>
    <property type="match status" value="1"/>
</dbReference>
<dbReference type="Gene3D" id="3.30.200.20">
    <property type="entry name" value="Phosphorylase Kinase, domain 1"/>
    <property type="match status" value="1"/>
</dbReference>
<dbReference type="Gene3D" id="1.25.40.10">
    <property type="entry name" value="Tetratricopeptide repeat domain"/>
    <property type="match status" value="2"/>
</dbReference>
<dbReference type="Gene3D" id="1.10.510.10">
    <property type="entry name" value="Transferase(Phosphotransferase) domain 1"/>
    <property type="match status" value="1"/>
</dbReference>
<dbReference type="InterPro" id="IPR011009">
    <property type="entry name" value="Kinase-like_dom_sf"/>
</dbReference>
<dbReference type="InterPro" id="IPR031634">
    <property type="entry name" value="PknG_rubred"/>
</dbReference>
<dbReference type="InterPro" id="IPR031636">
    <property type="entry name" value="PknG_TPR"/>
</dbReference>
<dbReference type="InterPro" id="IPR000719">
    <property type="entry name" value="Prot_kinase_dom"/>
</dbReference>
<dbReference type="InterPro" id="IPR008271">
    <property type="entry name" value="Ser/Thr_kinase_AS"/>
</dbReference>
<dbReference type="InterPro" id="IPR011990">
    <property type="entry name" value="TPR-like_helical_dom_sf"/>
</dbReference>
<dbReference type="PANTHER" id="PTHR24363">
    <property type="entry name" value="SERINE/THREONINE PROTEIN KINASE"/>
    <property type="match status" value="1"/>
</dbReference>
<dbReference type="PANTHER" id="PTHR24363:SF0">
    <property type="entry name" value="SERINE_THREONINE KINASE LIKE DOMAIN CONTAINING 1"/>
    <property type="match status" value="1"/>
</dbReference>
<dbReference type="Pfam" id="PF00069">
    <property type="entry name" value="Pkinase"/>
    <property type="match status" value="1"/>
</dbReference>
<dbReference type="Pfam" id="PF16919">
    <property type="entry name" value="PknG_rubred"/>
    <property type="match status" value="1"/>
</dbReference>
<dbReference type="Pfam" id="PF16918">
    <property type="entry name" value="PknG_TPR"/>
    <property type="match status" value="1"/>
</dbReference>
<dbReference type="SMART" id="SM00220">
    <property type="entry name" value="S_TKc"/>
    <property type="match status" value="1"/>
</dbReference>
<dbReference type="SUPFAM" id="SSF56112">
    <property type="entry name" value="Protein kinase-like (PK-like)"/>
    <property type="match status" value="1"/>
</dbReference>
<dbReference type="SUPFAM" id="SSF48452">
    <property type="entry name" value="TPR-like"/>
    <property type="match status" value="1"/>
</dbReference>
<dbReference type="PROSITE" id="PS50011">
    <property type="entry name" value="PROTEIN_KINASE_DOM"/>
    <property type="match status" value="1"/>
</dbReference>
<dbReference type="PROSITE" id="PS00108">
    <property type="entry name" value="PROTEIN_KINASE_ST"/>
    <property type="match status" value="1"/>
</dbReference>
<feature type="chain" id="PRO_0000171214" description="Serine/threonine-protein kinase PknG">
    <location>
        <begin position="1"/>
        <end position="750"/>
    </location>
</feature>
<feature type="domain" description="Protein kinase" evidence="2">
    <location>
        <begin position="151"/>
        <end position="396"/>
    </location>
</feature>
<feature type="region of interest" description="Disordered" evidence="4">
    <location>
        <begin position="1"/>
        <end position="66"/>
    </location>
</feature>
<feature type="compositionally biased region" description="Polar residues" evidence="4">
    <location>
        <begin position="17"/>
        <end position="34"/>
    </location>
</feature>
<feature type="active site" description="Proton acceptor" evidence="2 3">
    <location>
        <position position="276"/>
    </location>
</feature>
<feature type="binding site" evidence="2">
    <location>
        <begin position="157"/>
        <end position="165"/>
    </location>
    <ligand>
        <name>ATP</name>
        <dbReference type="ChEBI" id="CHEBI:30616"/>
    </ligand>
</feature>
<feature type="binding site" evidence="2">
    <location>
        <position position="181"/>
    </location>
    <ligand>
        <name>ATP</name>
        <dbReference type="ChEBI" id="CHEBI:30616"/>
    </ligand>
</feature>
<reference key="1">
    <citation type="journal article" date="2003" name="Proc. Natl. Acad. Sci. U.S.A.">
        <title>The complete genome sequence of Mycobacterium bovis.</title>
        <authorList>
            <person name="Garnier T."/>
            <person name="Eiglmeier K."/>
            <person name="Camus J.-C."/>
            <person name="Medina N."/>
            <person name="Mansoor H."/>
            <person name="Pryor M."/>
            <person name="Duthoy S."/>
            <person name="Grondin S."/>
            <person name="Lacroix C."/>
            <person name="Monsempe C."/>
            <person name="Simon S."/>
            <person name="Harris B."/>
            <person name="Atkin R."/>
            <person name="Doggett J."/>
            <person name="Mayes R."/>
            <person name="Keating L."/>
            <person name="Wheeler P.R."/>
            <person name="Parkhill J."/>
            <person name="Barrell B.G."/>
            <person name="Cole S.T."/>
            <person name="Gordon S.V."/>
            <person name="Hewinson R.G."/>
        </authorList>
    </citation>
    <scope>NUCLEOTIDE SEQUENCE [LARGE SCALE GENOMIC DNA]</scope>
    <source>
        <strain>ATCC BAA-935 / AF2122/97</strain>
    </source>
</reference>
<reference key="2">
    <citation type="journal article" date="2017" name="Genome Announc.">
        <title>Updated reference genome sequence and annotation of Mycobacterium bovis AF2122/97.</title>
        <authorList>
            <person name="Malone K.M."/>
            <person name="Farrell D."/>
            <person name="Stuber T.P."/>
            <person name="Schubert O.T."/>
            <person name="Aebersold R."/>
            <person name="Robbe-Austerman S."/>
            <person name="Gordon S.V."/>
        </authorList>
    </citation>
    <scope>NUCLEOTIDE SEQUENCE [LARGE SCALE GENOMIC DNA]</scope>
    <scope>GENOME REANNOTATION</scope>
    <source>
        <strain>ATCC BAA-935 / AF2122/97</strain>
    </source>
</reference>
<protein>
    <recommendedName>
        <fullName>Serine/threonine-protein kinase PknG</fullName>
        <ecNumber>2.7.11.1</ecNumber>
    </recommendedName>
</protein>
<proteinExistence type="inferred from homology"/>
<sequence>MAKASETERSGPGTQPADAQTATSATVRPLSTQAVFRPDFGDEDNFPHPTLGPDTEPQDRMATTSRVRPPVRRLGGGLVEIPRAPDIDPLEALMTNPVVPESKRFCWNCGRPVGRSDSETKGASEGWCPYCGSPYSFLPQLNPGDIVAGQYEVKGCIAHGGLGWIYLALDRNVNGRPVVLKGLVHSGDAEAQAMAMAERQFLAEVVHPSIVQIFNFVEHTDRHGDPVGYIVMEYVGGQSLKRSKGQKLPVAEAIAYLLEILPALSYLHSIGLVYNDLKPENIMLTEEQLKLIDLGAVSRINSFGYLYGTPGFQAPEIVRTGPTVATDIYTVGRTLAALTLDLPTRNGRYVDGLPEDDPVLKTYDSYGRLLRRAIDPDPRQRFTTAEEMSAQLTGVLREVVAQDTGVPRPGLSTIFSPSRSTFGVDLLVAHTDVYLDGQVHAEKLTANEIVTALSVPLVDPTDVAASVLQATVLSQPVQTLDSLRAARHGALDADGVDFSESVELPLMEVRALLDLGDVAKATRKLDDLAERVGWRWRLVWYRAVAELLTGDYDSATKHFTEVLDTFPGELAPKLALAATAELAGNTDEHKFYQTVWSTNDGVISAAFGLARARSAEGDRVGAVRTLDEVPPTSRHFTTARLTSAVTLLSGRSTSEVTEEQIRDAARRVEALPPTEPRVLQIRALVLGGALDWLKDNKASTNHILGFPFTSHGLRLGVEASLRSLARVAPTQRHRYTLVDMANKVRPTSTF</sequence>
<organism>
    <name type="scientific">Mycobacterium bovis (strain ATCC BAA-935 / AF2122/97)</name>
    <dbReference type="NCBI Taxonomy" id="233413"/>
    <lineage>
        <taxon>Bacteria</taxon>
        <taxon>Bacillati</taxon>
        <taxon>Actinomycetota</taxon>
        <taxon>Actinomycetes</taxon>
        <taxon>Mycobacteriales</taxon>
        <taxon>Mycobacteriaceae</taxon>
        <taxon>Mycobacterium</taxon>
        <taxon>Mycobacterium tuberculosis complex</taxon>
    </lineage>
</organism>
<comment type="catalytic activity">
    <reaction>
        <text>L-seryl-[protein] + ATP = O-phospho-L-seryl-[protein] + ADP + H(+)</text>
        <dbReference type="Rhea" id="RHEA:17989"/>
        <dbReference type="Rhea" id="RHEA-COMP:9863"/>
        <dbReference type="Rhea" id="RHEA-COMP:11604"/>
        <dbReference type="ChEBI" id="CHEBI:15378"/>
        <dbReference type="ChEBI" id="CHEBI:29999"/>
        <dbReference type="ChEBI" id="CHEBI:30616"/>
        <dbReference type="ChEBI" id="CHEBI:83421"/>
        <dbReference type="ChEBI" id="CHEBI:456216"/>
        <dbReference type="EC" id="2.7.11.1"/>
    </reaction>
</comment>
<comment type="catalytic activity">
    <reaction>
        <text>L-threonyl-[protein] + ATP = O-phospho-L-threonyl-[protein] + ADP + H(+)</text>
        <dbReference type="Rhea" id="RHEA:46608"/>
        <dbReference type="Rhea" id="RHEA-COMP:11060"/>
        <dbReference type="Rhea" id="RHEA-COMP:11605"/>
        <dbReference type="ChEBI" id="CHEBI:15378"/>
        <dbReference type="ChEBI" id="CHEBI:30013"/>
        <dbReference type="ChEBI" id="CHEBI:30616"/>
        <dbReference type="ChEBI" id="CHEBI:61977"/>
        <dbReference type="ChEBI" id="CHEBI:456216"/>
        <dbReference type="EC" id="2.7.11.1"/>
    </reaction>
</comment>
<comment type="PTM">
    <text evidence="1">Autophosphorylated.</text>
</comment>
<comment type="similarity">
    <text evidence="2">Belongs to the protein kinase superfamily. Ser/Thr protein kinase family.</text>
</comment>
<evidence type="ECO:0000250" key="1"/>
<evidence type="ECO:0000255" key="2">
    <source>
        <dbReference type="PROSITE-ProRule" id="PRU00159"/>
    </source>
</evidence>
<evidence type="ECO:0000255" key="3">
    <source>
        <dbReference type="PROSITE-ProRule" id="PRU10027"/>
    </source>
</evidence>
<evidence type="ECO:0000256" key="4">
    <source>
        <dbReference type="SAM" id="MobiDB-lite"/>
    </source>
</evidence>
<name>PKNG_MYCBO</name>
<accession>P65729</accession>
<accession>A0A1R3XXF1</accession>
<accession>P96256</accession>
<accession>X2BEZ4</accession>